<comment type="function">
    <text evidence="1">Catalyzes the attachment of serine to tRNA(Ser). Is also able to aminoacylate tRNA(Sec) with serine, to form the misacylated tRNA L-seryl-tRNA(Sec), which will be further converted into selenocysteinyl-tRNA(Sec).</text>
</comment>
<comment type="catalytic activity">
    <reaction evidence="1">
        <text>tRNA(Ser) + L-serine + ATP = L-seryl-tRNA(Ser) + AMP + diphosphate + H(+)</text>
        <dbReference type="Rhea" id="RHEA:12292"/>
        <dbReference type="Rhea" id="RHEA-COMP:9669"/>
        <dbReference type="Rhea" id="RHEA-COMP:9703"/>
        <dbReference type="ChEBI" id="CHEBI:15378"/>
        <dbReference type="ChEBI" id="CHEBI:30616"/>
        <dbReference type="ChEBI" id="CHEBI:33019"/>
        <dbReference type="ChEBI" id="CHEBI:33384"/>
        <dbReference type="ChEBI" id="CHEBI:78442"/>
        <dbReference type="ChEBI" id="CHEBI:78533"/>
        <dbReference type="ChEBI" id="CHEBI:456215"/>
        <dbReference type="EC" id="6.1.1.11"/>
    </reaction>
</comment>
<comment type="catalytic activity">
    <reaction evidence="1">
        <text>tRNA(Sec) + L-serine + ATP = L-seryl-tRNA(Sec) + AMP + diphosphate + H(+)</text>
        <dbReference type="Rhea" id="RHEA:42580"/>
        <dbReference type="Rhea" id="RHEA-COMP:9742"/>
        <dbReference type="Rhea" id="RHEA-COMP:10128"/>
        <dbReference type="ChEBI" id="CHEBI:15378"/>
        <dbReference type="ChEBI" id="CHEBI:30616"/>
        <dbReference type="ChEBI" id="CHEBI:33019"/>
        <dbReference type="ChEBI" id="CHEBI:33384"/>
        <dbReference type="ChEBI" id="CHEBI:78442"/>
        <dbReference type="ChEBI" id="CHEBI:78533"/>
        <dbReference type="ChEBI" id="CHEBI:456215"/>
        <dbReference type="EC" id="6.1.1.11"/>
    </reaction>
</comment>
<comment type="pathway">
    <text evidence="1">Aminoacyl-tRNA biosynthesis; selenocysteinyl-tRNA(Sec) biosynthesis; L-seryl-tRNA(Sec) from L-serine and tRNA(Sec): step 1/1.</text>
</comment>
<comment type="subunit">
    <text evidence="1">Homodimer. The tRNA molecule binds across the dimer.</text>
</comment>
<comment type="subcellular location">
    <subcellularLocation>
        <location evidence="1">Cytoplasm</location>
    </subcellularLocation>
</comment>
<comment type="domain">
    <text evidence="1">Consists of two distinct domains, a catalytic core and a N-terminal extension that is involved in tRNA binding.</text>
</comment>
<comment type="similarity">
    <text evidence="1">Belongs to the class-II aminoacyl-tRNA synthetase family. Type-1 seryl-tRNA synthetase subfamily.</text>
</comment>
<proteinExistence type="inferred from homology"/>
<accession>B0B8V5</accession>
<evidence type="ECO:0000255" key="1">
    <source>
        <dbReference type="HAMAP-Rule" id="MF_00176"/>
    </source>
</evidence>
<feature type="chain" id="PRO_1000098048" description="Serine--tRNA ligase">
    <location>
        <begin position="1"/>
        <end position="428"/>
    </location>
</feature>
<feature type="binding site" evidence="1">
    <location>
        <begin position="231"/>
        <end position="233"/>
    </location>
    <ligand>
        <name>L-serine</name>
        <dbReference type="ChEBI" id="CHEBI:33384"/>
    </ligand>
</feature>
<feature type="binding site" evidence="1">
    <location>
        <begin position="262"/>
        <end position="264"/>
    </location>
    <ligand>
        <name>ATP</name>
        <dbReference type="ChEBI" id="CHEBI:30616"/>
    </ligand>
</feature>
<feature type="binding site" evidence="1">
    <location>
        <position position="278"/>
    </location>
    <ligand>
        <name>ATP</name>
        <dbReference type="ChEBI" id="CHEBI:30616"/>
    </ligand>
</feature>
<feature type="binding site" evidence="1">
    <location>
        <position position="285"/>
    </location>
    <ligand>
        <name>L-serine</name>
        <dbReference type="ChEBI" id="CHEBI:33384"/>
    </ligand>
</feature>
<feature type="binding site" evidence="1">
    <location>
        <begin position="349"/>
        <end position="352"/>
    </location>
    <ligand>
        <name>ATP</name>
        <dbReference type="ChEBI" id="CHEBI:30616"/>
    </ligand>
</feature>
<feature type="binding site" evidence="1">
    <location>
        <position position="384"/>
    </location>
    <ligand>
        <name>L-serine</name>
        <dbReference type="ChEBI" id="CHEBI:33384"/>
    </ligand>
</feature>
<gene>
    <name evidence="1" type="primary">serS</name>
    <name type="ordered locus">CTL0098</name>
</gene>
<name>SYS_CHLT2</name>
<organism>
    <name type="scientific">Chlamydia trachomatis serovar L2 (strain ATCC VR-902B / DSM 19102 / 434/Bu)</name>
    <dbReference type="NCBI Taxonomy" id="471472"/>
    <lineage>
        <taxon>Bacteria</taxon>
        <taxon>Pseudomonadati</taxon>
        <taxon>Chlamydiota</taxon>
        <taxon>Chlamydiia</taxon>
        <taxon>Chlamydiales</taxon>
        <taxon>Chlamydiaceae</taxon>
        <taxon>Chlamydia/Chlamydophila group</taxon>
        <taxon>Chlamydia</taxon>
    </lineage>
</organism>
<reference key="1">
    <citation type="journal article" date="2008" name="Genome Res.">
        <title>Chlamydia trachomatis: genome sequence analysis of lymphogranuloma venereum isolates.</title>
        <authorList>
            <person name="Thomson N.R."/>
            <person name="Holden M.T.G."/>
            <person name="Carder C."/>
            <person name="Lennard N."/>
            <person name="Lockey S.J."/>
            <person name="Marsh P."/>
            <person name="Skipp P."/>
            <person name="O'Connor C.D."/>
            <person name="Goodhead I."/>
            <person name="Norbertzcak H."/>
            <person name="Harris B."/>
            <person name="Ormond D."/>
            <person name="Rance R."/>
            <person name="Quail M.A."/>
            <person name="Parkhill J."/>
            <person name="Stephens R.S."/>
            <person name="Clarke I.N."/>
        </authorList>
    </citation>
    <scope>NUCLEOTIDE SEQUENCE [LARGE SCALE GENOMIC DNA]</scope>
    <source>
        <strain>ATCC VR-902B / DSM 19102 / 434/Bu</strain>
    </source>
</reference>
<keyword id="KW-0030">Aminoacyl-tRNA synthetase</keyword>
<keyword id="KW-0067">ATP-binding</keyword>
<keyword id="KW-0963">Cytoplasm</keyword>
<keyword id="KW-0436">Ligase</keyword>
<keyword id="KW-0547">Nucleotide-binding</keyword>
<keyword id="KW-0648">Protein biosynthesis</keyword>
<protein>
    <recommendedName>
        <fullName evidence="1">Serine--tRNA ligase</fullName>
        <ecNumber evidence="1">6.1.1.11</ecNumber>
    </recommendedName>
    <alternativeName>
        <fullName evidence="1">Seryl-tRNA synthetase</fullName>
        <shortName evidence="1">SerRS</shortName>
    </alternativeName>
    <alternativeName>
        <fullName evidence="1">Seryl-tRNA(Ser/Sec) synthetase</fullName>
    </alternativeName>
</protein>
<dbReference type="EC" id="6.1.1.11" evidence="1"/>
<dbReference type="EMBL" id="AM884176">
    <property type="protein sequence ID" value="CAP03542.1"/>
    <property type="molecule type" value="Genomic_DNA"/>
</dbReference>
<dbReference type="RefSeq" id="WP_009873332.1">
    <property type="nucleotide sequence ID" value="NC_010287.1"/>
</dbReference>
<dbReference type="RefSeq" id="YP_001654189.1">
    <property type="nucleotide sequence ID" value="NC_010287.1"/>
</dbReference>
<dbReference type="SMR" id="B0B8V5"/>
<dbReference type="KEGG" id="ctb:CTL0098"/>
<dbReference type="PATRIC" id="fig|471472.4.peg.107"/>
<dbReference type="HOGENOM" id="CLU_023797_1_1_0"/>
<dbReference type="UniPathway" id="UPA00906">
    <property type="reaction ID" value="UER00895"/>
</dbReference>
<dbReference type="Proteomes" id="UP001154402">
    <property type="component" value="Chromosome"/>
</dbReference>
<dbReference type="GO" id="GO:0005737">
    <property type="term" value="C:cytoplasm"/>
    <property type="evidence" value="ECO:0007669"/>
    <property type="project" value="UniProtKB-SubCell"/>
</dbReference>
<dbReference type="GO" id="GO:0005524">
    <property type="term" value="F:ATP binding"/>
    <property type="evidence" value="ECO:0007669"/>
    <property type="project" value="UniProtKB-UniRule"/>
</dbReference>
<dbReference type="GO" id="GO:0004828">
    <property type="term" value="F:serine-tRNA ligase activity"/>
    <property type="evidence" value="ECO:0007669"/>
    <property type="project" value="UniProtKB-UniRule"/>
</dbReference>
<dbReference type="GO" id="GO:0016260">
    <property type="term" value="P:selenocysteine biosynthetic process"/>
    <property type="evidence" value="ECO:0007669"/>
    <property type="project" value="UniProtKB-UniRule"/>
</dbReference>
<dbReference type="GO" id="GO:0006434">
    <property type="term" value="P:seryl-tRNA aminoacylation"/>
    <property type="evidence" value="ECO:0007669"/>
    <property type="project" value="UniProtKB-UniRule"/>
</dbReference>
<dbReference type="CDD" id="cd00770">
    <property type="entry name" value="SerRS_core"/>
    <property type="match status" value="1"/>
</dbReference>
<dbReference type="Gene3D" id="3.30.930.10">
    <property type="entry name" value="Bira Bifunctional Protein, Domain 2"/>
    <property type="match status" value="1"/>
</dbReference>
<dbReference type="Gene3D" id="1.10.287.40">
    <property type="entry name" value="Serine-tRNA synthetase, tRNA binding domain"/>
    <property type="match status" value="1"/>
</dbReference>
<dbReference type="HAMAP" id="MF_00176">
    <property type="entry name" value="Ser_tRNA_synth_type1"/>
    <property type="match status" value="1"/>
</dbReference>
<dbReference type="InterPro" id="IPR002314">
    <property type="entry name" value="aa-tRNA-synt_IIb"/>
</dbReference>
<dbReference type="InterPro" id="IPR006195">
    <property type="entry name" value="aa-tRNA-synth_II"/>
</dbReference>
<dbReference type="InterPro" id="IPR045864">
    <property type="entry name" value="aa-tRNA-synth_II/BPL/LPL"/>
</dbReference>
<dbReference type="InterPro" id="IPR002317">
    <property type="entry name" value="Ser-tRNA-ligase_type_1"/>
</dbReference>
<dbReference type="InterPro" id="IPR015866">
    <property type="entry name" value="Ser-tRNA-synth_1_N"/>
</dbReference>
<dbReference type="InterPro" id="IPR042103">
    <property type="entry name" value="SerRS_1_N_sf"/>
</dbReference>
<dbReference type="InterPro" id="IPR033729">
    <property type="entry name" value="SerRS_core"/>
</dbReference>
<dbReference type="InterPro" id="IPR010978">
    <property type="entry name" value="tRNA-bd_arm"/>
</dbReference>
<dbReference type="NCBIfam" id="TIGR00414">
    <property type="entry name" value="serS"/>
    <property type="match status" value="1"/>
</dbReference>
<dbReference type="PANTHER" id="PTHR43697:SF1">
    <property type="entry name" value="SERINE--TRNA LIGASE"/>
    <property type="match status" value="1"/>
</dbReference>
<dbReference type="PANTHER" id="PTHR43697">
    <property type="entry name" value="SERYL-TRNA SYNTHETASE"/>
    <property type="match status" value="1"/>
</dbReference>
<dbReference type="Pfam" id="PF02403">
    <property type="entry name" value="Seryl_tRNA_N"/>
    <property type="match status" value="1"/>
</dbReference>
<dbReference type="Pfam" id="PF00587">
    <property type="entry name" value="tRNA-synt_2b"/>
    <property type="match status" value="1"/>
</dbReference>
<dbReference type="PIRSF" id="PIRSF001529">
    <property type="entry name" value="Ser-tRNA-synth_IIa"/>
    <property type="match status" value="1"/>
</dbReference>
<dbReference type="PRINTS" id="PR00981">
    <property type="entry name" value="TRNASYNTHSER"/>
</dbReference>
<dbReference type="SUPFAM" id="SSF55681">
    <property type="entry name" value="Class II aaRS and biotin synthetases"/>
    <property type="match status" value="1"/>
</dbReference>
<dbReference type="SUPFAM" id="SSF46589">
    <property type="entry name" value="tRNA-binding arm"/>
    <property type="match status" value="1"/>
</dbReference>
<dbReference type="PROSITE" id="PS50862">
    <property type="entry name" value="AA_TRNA_LIGASE_II"/>
    <property type="match status" value="1"/>
</dbReference>
<sequence length="428" mass="48406">MLDIRLIRKEPKECESRLQKKDPAISLERLLDLDKTVRQLKADSEALLAKRKVLSGQIHKAKVANENADALIQEVNTIADQLVAFETTLQEQEALLEDLMARLPNYPDEDVPVSPDKTGNQMIKSHGEVPTFPFPPKHHMQLNEALQILDFKLPAKTTGSGWPAYCNEGVLLEWALLTYLLNKQQAHGFQLWLPPLLVKRDILFGSGQIPKFDGQYYRVEDGDRSLFLIPTAEVVLNGFHSQEILNEQDLPLCYAAFTPCFRREAGAGGAHERGLVRVHQFHKVEMFAFTTPEQEEVVYQKMLHVVEEILSELQLPYQLSLLSTGDMSFTAKKTIDAEVWLPGQKAFYEVSSISKCGDFQARRSETRYRDAQGKLHFVNTLNGSGLATPRLLVAILENYQQADGSVVIPSVLRPYMNNQEILLPKTVR</sequence>